<dbReference type="EMBL" id="U02680">
    <property type="protein sequence ID" value="AAC50062.1"/>
    <property type="molecule type" value="mRNA"/>
</dbReference>
<dbReference type="EMBL" id="AK127868">
    <property type="protein sequence ID" value="BAG54588.1"/>
    <property type="molecule type" value="mRNA"/>
</dbReference>
<dbReference type="EMBL" id="AK291223">
    <property type="protein sequence ID" value="BAF83912.1"/>
    <property type="molecule type" value="mRNA"/>
</dbReference>
<dbReference type="EMBL" id="AK297206">
    <property type="protein sequence ID" value="BAG59691.1"/>
    <property type="molecule type" value="mRNA"/>
</dbReference>
<dbReference type="EMBL" id="CR541736">
    <property type="protein sequence ID" value="CAG46536.1"/>
    <property type="molecule type" value="mRNA"/>
</dbReference>
<dbReference type="EMBL" id="CR541761">
    <property type="protein sequence ID" value="CAG46561.1"/>
    <property type="molecule type" value="mRNA"/>
</dbReference>
<dbReference type="EMBL" id="BT019691">
    <property type="protein sequence ID" value="AAV38497.1"/>
    <property type="molecule type" value="mRNA"/>
</dbReference>
<dbReference type="EMBL" id="AB209302">
    <property type="protein sequence ID" value="BAD92539.1"/>
    <property type="status" value="ALT_INIT"/>
    <property type="molecule type" value="mRNA"/>
</dbReference>
<dbReference type="EMBL" id="BC022344">
    <property type="protein sequence ID" value="AAH22344.1"/>
    <property type="molecule type" value="mRNA"/>
</dbReference>
<dbReference type="EMBL" id="BC043148">
    <property type="protein sequence ID" value="AAH43148.2"/>
    <property type="status" value="ALT_INIT"/>
    <property type="molecule type" value="mRNA"/>
</dbReference>
<dbReference type="EMBL" id="BC068548">
    <property type="protein sequence ID" value="AAH68548.1"/>
    <property type="status" value="ALT_INIT"/>
    <property type="molecule type" value="mRNA"/>
</dbReference>
<dbReference type="CCDS" id="CCDS31780.2">
    <molecule id="Q12792-2"/>
</dbReference>
<dbReference type="CCDS" id="CCDS55818.1">
    <molecule id="Q12792-3"/>
</dbReference>
<dbReference type="PIR" id="A55922">
    <property type="entry name" value="A55922"/>
</dbReference>
<dbReference type="RefSeq" id="NP_001229326.1">
    <molecule id="Q12792-3"/>
    <property type="nucleotide sequence ID" value="NM_001242397.2"/>
</dbReference>
<dbReference type="RefSeq" id="NP_002813.3">
    <molecule id="Q12792-2"/>
    <property type="nucleotide sequence ID" value="NM_002822.4"/>
</dbReference>
<dbReference type="RefSeq" id="XP_047285154.1">
    <molecule id="Q12792-4"/>
    <property type="nucleotide sequence ID" value="XM_047429198.1"/>
</dbReference>
<dbReference type="RefSeq" id="XP_047285155.1">
    <molecule id="Q12792-4"/>
    <property type="nucleotide sequence ID" value="XM_047429199.1"/>
</dbReference>
<dbReference type="RefSeq" id="XP_054228622.1">
    <molecule id="Q12792-4"/>
    <property type="nucleotide sequence ID" value="XM_054372647.1"/>
</dbReference>
<dbReference type="RefSeq" id="XP_054228623.1">
    <molecule id="Q12792-4"/>
    <property type="nucleotide sequence ID" value="XM_054372648.1"/>
</dbReference>
<dbReference type="PDB" id="7CCC">
    <property type="method" value="X-ray"/>
    <property type="resolution" value="3.20 A"/>
    <property type="chains" value="B=1-350"/>
</dbReference>
<dbReference type="PDBsum" id="7CCC"/>
<dbReference type="SMR" id="Q12792"/>
<dbReference type="BioGRID" id="111723">
    <property type="interactions" value="183"/>
</dbReference>
<dbReference type="FunCoup" id="Q12792">
    <property type="interactions" value="1449"/>
</dbReference>
<dbReference type="IntAct" id="Q12792">
    <property type="interactions" value="95"/>
</dbReference>
<dbReference type="MINT" id="Q12792"/>
<dbReference type="STRING" id="9606.ENSP00000449428"/>
<dbReference type="GlyGen" id="Q12792">
    <property type="glycosylation" value="1 site, 1 O-linked glycan (1 site)"/>
</dbReference>
<dbReference type="iPTMnet" id="Q12792"/>
<dbReference type="PhosphoSitePlus" id="Q12792"/>
<dbReference type="SwissPalm" id="Q12792"/>
<dbReference type="BioMuta" id="TWF1"/>
<dbReference type="DMDM" id="259016376"/>
<dbReference type="OGP" id="Q12792"/>
<dbReference type="jPOST" id="Q12792"/>
<dbReference type="MassIVE" id="Q12792"/>
<dbReference type="PaxDb" id="9606-ENSP00000449428"/>
<dbReference type="PeptideAtlas" id="Q12792"/>
<dbReference type="ProteomicsDB" id="58933">
    <molecule id="Q12792-2"/>
</dbReference>
<dbReference type="ProteomicsDB" id="58934">
    <molecule id="Q12792-3"/>
</dbReference>
<dbReference type="ProteomicsDB" id="58935">
    <molecule id="Q12792-4"/>
</dbReference>
<dbReference type="Pumba" id="Q12792"/>
<dbReference type="Antibodypedia" id="13271">
    <property type="antibodies" value="376 antibodies from 31 providers"/>
</dbReference>
<dbReference type="DNASU" id="5756"/>
<dbReference type="Ensembl" id="ENST00000395510.7">
    <molecule id="Q12792-2"/>
    <property type="protein sequence ID" value="ENSP00000378886.2"/>
    <property type="gene ID" value="ENSG00000151239.14"/>
</dbReference>
<dbReference type="Ensembl" id="ENST00000548315.5">
    <molecule id="Q12792-3"/>
    <property type="protein sequence ID" value="ENSP00000449428.1"/>
    <property type="gene ID" value="ENSG00000151239.14"/>
</dbReference>
<dbReference type="Ensembl" id="ENST00000552521.5">
    <molecule id="Q12792-4"/>
    <property type="protein sequence ID" value="ENSP00000448750.1"/>
    <property type="gene ID" value="ENSG00000151239.14"/>
</dbReference>
<dbReference type="GeneID" id="5756"/>
<dbReference type="KEGG" id="hsa:5756"/>
<dbReference type="MANE-Select" id="ENST00000395510.7">
    <property type="protein sequence ID" value="ENSP00000378886.2"/>
    <property type="RefSeq nucleotide sequence ID" value="NM_002822.5"/>
    <property type="RefSeq protein sequence ID" value="NP_002813.3"/>
</dbReference>
<dbReference type="UCSC" id="uc001roa.4">
    <molecule id="Q12792-2"/>
    <property type="organism name" value="human"/>
</dbReference>
<dbReference type="AGR" id="HGNC:9620"/>
<dbReference type="CTD" id="5756"/>
<dbReference type="DisGeNET" id="5756"/>
<dbReference type="GeneCards" id="TWF1"/>
<dbReference type="HGNC" id="HGNC:9620">
    <property type="gene designation" value="TWF1"/>
</dbReference>
<dbReference type="HPA" id="ENSG00000151239">
    <property type="expression patterns" value="Low tissue specificity"/>
</dbReference>
<dbReference type="MIM" id="610932">
    <property type="type" value="gene"/>
</dbReference>
<dbReference type="neXtProt" id="NX_Q12792"/>
<dbReference type="OpenTargets" id="ENSG00000151239"/>
<dbReference type="PharmGKB" id="PA162407406"/>
<dbReference type="VEuPathDB" id="HostDB:ENSG00000151239"/>
<dbReference type="eggNOG" id="KOG1747">
    <property type="taxonomic scope" value="Eukaryota"/>
</dbReference>
<dbReference type="GeneTree" id="ENSGT00530000063868"/>
<dbReference type="InParanoid" id="Q12792"/>
<dbReference type="OMA" id="YLFKHTH"/>
<dbReference type="OrthoDB" id="10006997at2759"/>
<dbReference type="PAN-GO" id="Q12792">
    <property type="GO annotations" value="10 GO annotations based on evolutionary models"/>
</dbReference>
<dbReference type="PhylomeDB" id="Q12792"/>
<dbReference type="TreeFam" id="TF352598"/>
<dbReference type="PathwayCommons" id="Q12792"/>
<dbReference type="Reactome" id="R-HSA-9013418">
    <property type="pathway name" value="RHOBTB2 GTPase cycle"/>
</dbReference>
<dbReference type="Reactome" id="R-HSA-9662360">
    <property type="pathway name" value="Sensory processing of sound by inner hair cells of the cochlea"/>
</dbReference>
<dbReference type="Reactome" id="R-HSA-9662361">
    <property type="pathway name" value="Sensory processing of sound by outer hair cells of the cochlea"/>
</dbReference>
<dbReference type="SignaLink" id="Q12792"/>
<dbReference type="BioGRID-ORCS" id="5756">
    <property type="hits" value="103 hits in 1157 CRISPR screens"/>
</dbReference>
<dbReference type="CD-CODE" id="FB4E32DD">
    <property type="entry name" value="Presynaptic clusters and postsynaptic densities"/>
</dbReference>
<dbReference type="ChiTaRS" id="TWF1">
    <property type="organism name" value="human"/>
</dbReference>
<dbReference type="GeneWiki" id="TWF1"/>
<dbReference type="GenomeRNAi" id="5756"/>
<dbReference type="Pharos" id="Q12792">
    <property type="development level" value="Tbio"/>
</dbReference>
<dbReference type="PRO" id="PR:Q12792"/>
<dbReference type="Proteomes" id="UP000005640">
    <property type="component" value="Chromosome 12"/>
</dbReference>
<dbReference type="RNAct" id="Q12792">
    <property type="molecule type" value="protein"/>
</dbReference>
<dbReference type="Bgee" id="ENSG00000151239">
    <property type="expression patterns" value="Expressed in secondary oocyte and 211 other cell types or tissues"/>
</dbReference>
<dbReference type="ExpressionAtlas" id="Q12792">
    <property type="expression patterns" value="baseline and differential"/>
</dbReference>
<dbReference type="GO" id="GO:0015629">
    <property type="term" value="C:actin cytoskeleton"/>
    <property type="evidence" value="ECO:0000250"/>
    <property type="project" value="UniProtKB"/>
</dbReference>
<dbReference type="GO" id="GO:0005884">
    <property type="term" value="C:actin filament"/>
    <property type="evidence" value="ECO:0000318"/>
    <property type="project" value="GO_Central"/>
</dbReference>
<dbReference type="GO" id="GO:0005911">
    <property type="term" value="C:cell-cell junction"/>
    <property type="evidence" value="ECO:0000250"/>
    <property type="project" value="BHF-UCL"/>
</dbReference>
<dbReference type="GO" id="GO:0005737">
    <property type="term" value="C:cytoplasm"/>
    <property type="evidence" value="ECO:0000318"/>
    <property type="project" value="GO_Central"/>
</dbReference>
<dbReference type="GO" id="GO:0005829">
    <property type="term" value="C:cytosol"/>
    <property type="evidence" value="ECO:0000314"/>
    <property type="project" value="HPA"/>
</dbReference>
<dbReference type="GO" id="GO:0030175">
    <property type="term" value="C:filopodium"/>
    <property type="evidence" value="ECO:0000250"/>
    <property type="project" value="BHF-UCL"/>
</dbReference>
<dbReference type="GO" id="GO:0005925">
    <property type="term" value="C:focal adhesion"/>
    <property type="evidence" value="ECO:0007005"/>
    <property type="project" value="UniProtKB"/>
</dbReference>
<dbReference type="GO" id="GO:0030016">
    <property type="term" value="C:myofibril"/>
    <property type="evidence" value="ECO:0000250"/>
    <property type="project" value="BHF-UCL"/>
</dbReference>
<dbReference type="GO" id="GO:0048471">
    <property type="term" value="C:perinuclear region of cytoplasm"/>
    <property type="evidence" value="ECO:0000250"/>
    <property type="project" value="BHF-UCL"/>
</dbReference>
<dbReference type="GO" id="GO:0032587">
    <property type="term" value="C:ruffle membrane"/>
    <property type="evidence" value="ECO:0007669"/>
    <property type="project" value="Ensembl"/>
</dbReference>
<dbReference type="GO" id="GO:0003779">
    <property type="term" value="F:actin binding"/>
    <property type="evidence" value="ECO:0000314"/>
    <property type="project" value="UniProtKB"/>
</dbReference>
<dbReference type="GO" id="GO:0051015">
    <property type="term" value="F:actin filament binding"/>
    <property type="evidence" value="ECO:0000318"/>
    <property type="project" value="GO_Central"/>
</dbReference>
<dbReference type="GO" id="GO:0003785">
    <property type="term" value="F:actin monomer binding"/>
    <property type="evidence" value="ECO:0000250"/>
    <property type="project" value="BHF-UCL"/>
</dbReference>
<dbReference type="GO" id="GO:0005524">
    <property type="term" value="F:ATP binding"/>
    <property type="evidence" value="ECO:0000314"/>
    <property type="project" value="BHF-UCL"/>
</dbReference>
<dbReference type="GO" id="GO:0045296">
    <property type="term" value="F:cadherin binding"/>
    <property type="evidence" value="ECO:0007005"/>
    <property type="project" value="BHF-UCL"/>
</dbReference>
<dbReference type="GO" id="GO:0005546">
    <property type="term" value="F:phosphatidylinositol-4,5-bisphosphate binding"/>
    <property type="evidence" value="ECO:0000250"/>
    <property type="project" value="BHF-UCL"/>
</dbReference>
<dbReference type="GO" id="GO:0030042">
    <property type="term" value="P:actin filament depolymerization"/>
    <property type="evidence" value="ECO:0000318"/>
    <property type="project" value="GO_Central"/>
</dbReference>
<dbReference type="GO" id="GO:0051016">
    <property type="term" value="P:barbed-end actin filament capping"/>
    <property type="evidence" value="ECO:0000250"/>
    <property type="project" value="BHF-UCL"/>
</dbReference>
<dbReference type="GO" id="GO:0030837">
    <property type="term" value="P:negative regulation of actin filament polymerization"/>
    <property type="evidence" value="ECO:0000250"/>
    <property type="project" value="BHF-UCL"/>
</dbReference>
<dbReference type="GO" id="GO:0010613">
    <property type="term" value="P:positive regulation of cardiac muscle hypertrophy"/>
    <property type="evidence" value="ECO:0007669"/>
    <property type="project" value="Ensembl"/>
</dbReference>
<dbReference type="GO" id="GO:0010976">
    <property type="term" value="P:positive regulation of neuron projection development"/>
    <property type="evidence" value="ECO:0000318"/>
    <property type="project" value="GO_Central"/>
</dbReference>
<dbReference type="GO" id="GO:0010591">
    <property type="term" value="P:regulation of lamellipodium assembly"/>
    <property type="evidence" value="ECO:0000318"/>
    <property type="project" value="GO_Central"/>
</dbReference>
<dbReference type="CDD" id="cd11284">
    <property type="entry name" value="ADF_Twf-C_like"/>
    <property type="match status" value="1"/>
</dbReference>
<dbReference type="CDD" id="cd11285">
    <property type="entry name" value="ADF_Twf-N_like"/>
    <property type="match status" value="1"/>
</dbReference>
<dbReference type="FunFam" id="3.40.20.10:FF:000007">
    <property type="entry name" value="Twinfilin-1 isoform 1"/>
    <property type="match status" value="1"/>
</dbReference>
<dbReference type="FunFam" id="3.40.20.10:FF:000012">
    <property type="entry name" value="Twinfilin-1 isoform 1"/>
    <property type="match status" value="1"/>
</dbReference>
<dbReference type="Gene3D" id="3.40.20.10">
    <property type="entry name" value="Severin"/>
    <property type="match status" value="2"/>
</dbReference>
<dbReference type="InterPro" id="IPR002108">
    <property type="entry name" value="ADF-H"/>
</dbReference>
<dbReference type="InterPro" id="IPR029006">
    <property type="entry name" value="ADF-H/Gelsolin-like_dom_sf"/>
</dbReference>
<dbReference type="InterPro" id="IPR028458">
    <property type="entry name" value="Twinfilin"/>
</dbReference>
<dbReference type="PANTHER" id="PTHR13759">
    <property type="entry name" value="TWINFILIN"/>
    <property type="match status" value="1"/>
</dbReference>
<dbReference type="PANTHER" id="PTHR13759:SF8">
    <property type="entry name" value="TWINFILIN-1"/>
    <property type="match status" value="1"/>
</dbReference>
<dbReference type="Pfam" id="PF00241">
    <property type="entry name" value="Cofilin_ADF"/>
    <property type="match status" value="2"/>
</dbReference>
<dbReference type="SMART" id="SM00102">
    <property type="entry name" value="ADF"/>
    <property type="match status" value="2"/>
</dbReference>
<dbReference type="SUPFAM" id="SSF55753">
    <property type="entry name" value="Actin depolymerizing proteins"/>
    <property type="match status" value="2"/>
</dbReference>
<dbReference type="PROSITE" id="PS51263">
    <property type="entry name" value="ADF_H"/>
    <property type="match status" value="2"/>
</dbReference>
<accession>Q12792</accession>
<accession>A8K5A8</accession>
<accession>B3KXS6</accession>
<accession>B4DLX9</accession>
<accession>Q59G07</accession>
<accession>Q5U0B1</accession>
<accession>Q6FHJ1</accession>
<accession>Q6FHL6</accession>
<accession>Q6NUK9</accession>
<accession>Q86XL6</accession>
<accession>Q8TCD3</accession>
<name>TWF1_HUMAN</name>
<gene>
    <name type="primary">TWF1</name>
    <name type="synonym">PTK9</name>
</gene>
<proteinExistence type="evidence at protein level"/>
<feature type="initiator methionine" description="Removed" evidence="8">
    <location>
        <position position="1"/>
    </location>
</feature>
<feature type="chain" id="PRO_0000214950" description="Twinfilin-1">
    <location>
        <begin position="2"/>
        <end position="350"/>
    </location>
</feature>
<feature type="domain" description="ADF-H 1" evidence="4">
    <location>
        <begin position="2"/>
        <end position="139"/>
    </location>
</feature>
<feature type="domain" description="ADF-H 2" evidence="4">
    <location>
        <begin position="175"/>
        <end position="313"/>
    </location>
</feature>
<feature type="region of interest" description="Disordered" evidence="5">
    <location>
        <begin position="316"/>
        <end position="350"/>
    </location>
</feature>
<feature type="modified residue" description="N-acetylserine" evidence="8">
    <location>
        <position position="2"/>
    </location>
</feature>
<feature type="modified residue" description="Phosphoserine" evidence="18 19">
    <location>
        <position position="143"/>
    </location>
</feature>
<feature type="modified residue" description="Phosphoserine" evidence="2">
    <location>
        <position position="277"/>
    </location>
</feature>
<feature type="modified residue" description="Phosphotyrosine" evidence="15 17">
    <location>
        <position position="309"/>
    </location>
</feature>
<feature type="modified residue" description="Phosphothreonine" evidence="16">
    <location>
        <position position="349"/>
    </location>
</feature>
<feature type="splice variant" id="VSP_038075" description="In isoform 4." evidence="9 10">
    <location>
        <begin position="1"/>
        <end position="98"/>
    </location>
</feature>
<feature type="splice variant" id="VSP_017899" description="In isoform 3." evidence="11">
    <original>E</original>
    <variation>ESPEDHIG</variation>
    <location>
        <position position="161"/>
    </location>
</feature>
<feature type="sequence conflict" description="In Ref. 3; CAG46561." evidence="12" ref="3">
    <original>D</original>
    <variation>Y</variation>
    <location>
        <position position="12"/>
    </location>
</feature>
<feature type="sequence conflict" description="In Ref. 2; BAG54588." evidence="12" ref="2">
    <original>E</original>
    <variation>V</variation>
    <location>
        <position position="246"/>
    </location>
</feature>
<feature type="sequence conflict" description="In Ref. 3; CAG46536." evidence="12" ref="3">
    <original>R</original>
    <variation>W</variation>
    <location>
        <position position="269"/>
    </location>
</feature>
<feature type="sequence conflict" description="In Ref. 2; BAF83912." evidence="12" ref="2">
    <original>E</original>
    <variation>G</variation>
    <location>
        <position position="302"/>
    </location>
</feature>
<feature type="sequence conflict" description="In Ref. 2; BAG59691." evidence="12" ref="2">
    <original>P</original>
    <variation>H</variation>
    <location>
        <position position="329"/>
    </location>
</feature>
<feature type="helix" evidence="20">
    <location>
        <begin position="11"/>
        <end position="20"/>
    </location>
</feature>
<feature type="turn" evidence="20">
    <location>
        <begin position="21"/>
        <end position="23"/>
    </location>
</feature>
<feature type="strand" evidence="20">
    <location>
        <begin position="26"/>
        <end position="33"/>
    </location>
</feature>
<feature type="strand" evidence="20">
    <location>
        <begin position="36"/>
        <end position="43"/>
    </location>
</feature>
<feature type="helix" evidence="20">
    <location>
        <begin position="49"/>
        <end position="57"/>
    </location>
</feature>
<feature type="helix" evidence="20">
    <location>
        <begin position="58"/>
        <end position="60"/>
    </location>
</feature>
<feature type="strand" evidence="20">
    <location>
        <begin position="67"/>
        <end position="76"/>
    </location>
</feature>
<feature type="strand" evidence="20">
    <location>
        <begin position="78"/>
        <end position="88"/>
    </location>
</feature>
<feature type="helix" evidence="20">
    <location>
        <begin position="95"/>
        <end position="103"/>
    </location>
</feature>
<feature type="helix" evidence="20">
    <location>
        <begin position="105"/>
        <end position="112"/>
    </location>
</feature>
<feature type="helix" evidence="20">
    <location>
        <begin position="114"/>
        <end position="116"/>
    </location>
</feature>
<feature type="strand" evidence="20">
    <location>
        <begin position="117"/>
        <end position="125"/>
    </location>
</feature>
<feature type="helix" evidence="20">
    <location>
        <begin position="126"/>
        <end position="129"/>
    </location>
</feature>
<feature type="helix" evidence="20">
    <location>
        <begin position="131"/>
        <end position="141"/>
    </location>
</feature>
<feature type="helix" evidence="20">
    <location>
        <begin position="149"/>
        <end position="166"/>
    </location>
</feature>
<feature type="helix" evidence="20">
    <location>
        <begin position="171"/>
        <end position="173"/>
    </location>
</feature>
<feature type="helix" evidence="20">
    <location>
        <begin position="184"/>
        <end position="194"/>
    </location>
</feature>
<feature type="strand" evidence="20">
    <location>
        <begin position="199"/>
        <end position="206"/>
    </location>
</feature>
<feature type="turn" evidence="20">
    <location>
        <begin position="207"/>
        <end position="210"/>
    </location>
</feature>
<feature type="strand" evidence="20">
    <location>
        <begin position="211"/>
        <end position="216"/>
    </location>
</feature>
<feature type="turn" evidence="20">
    <location>
        <begin position="222"/>
        <end position="224"/>
    </location>
</feature>
<feature type="helix" evidence="20">
    <location>
        <begin position="225"/>
        <end position="228"/>
    </location>
</feature>
<feature type="strand" evidence="20">
    <location>
        <begin position="231"/>
        <end position="233"/>
    </location>
</feature>
<feature type="strand" evidence="20">
    <location>
        <begin position="235"/>
        <end position="245"/>
    </location>
</feature>
<feature type="strand" evidence="20">
    <location>
        <begin position="248"/>
        <end position="258"/>
    </location>
</feature>
<feature type="helix" evidence="20">
    <location>
        <begin position="266"/>
        <end position="286"/>
    </location>
</feature>
<feature type="strand" evidence="20">
    <location>
        <begin position="291"/>
        <end position="299"/>
    </location>
</feature>
<feature type="helix" evidence="20">
    <location>
        <begin position="300"/>
        <end position="302"/>
    </location>
</feature>
<feature type="helix" evidence="20">
    <location>
        <begin position="305"/>
        <end position="312"/>
    </location>
</feature>
<feature type="sequence variant" id="VAR_082792" description="Found in a patient with isolated coloboma; increases interaction with ACTG1." evidence="6">
    <original>P</original>
    <variation>S</variation>
    <location sequence="Q12792-3">
        <position position="349"/>
    </location>
</feature>
<evidence type="ECO:0000250" key="1"/>
<evidence type="ECO:0000250" key="2">
    <source>
        <dbReference type="UniProtKB" id="Q5RJR2"/>
    </source>
</evidence>
<evidence type="ECO:0000250" key="3">
    <source>
        <dbReference type="UniProtKB" id="Q91YR1"/>
    </source>
</evidence>
<evidence type="ECO:0000255" key="4">
    <source>
        <dbReference type="PROSITE-ProRule" id="PRU00599"/>
    </source>
</evidence>
<evidence type="ECO:0000256" key="5">
    <source>
        <dbReference type="SAM" id="MobiDB-lite"/>
    </source>
</evidence>
<evidence type="ECO:0000269" key="6">
    <source>
    </source>
</evidence>
<evidence type="ECO:0000269" key="7">
    <source>
    </source>
</evidence>
<evidence type="ECO:0000269" key="8">
    <source ref="7"/>
</evidence>
<evidence type="ECO:0000303" key="9">
    <source>
    </source>
</evidence>
<evidence type="ECO:0000303" key="10">
    <source>
    </source>
</evidence>
<evidence type="ECO:0000303" key="11">
    <source ref="5"/>
</evidence>
<evidence type="ECO:0000305" key="12"/>
<evidence type="ECO:0000305" key="13">
    <source>
    </source>
</evidence>
<evidence type="ECO:0000312" key="14">
    <source>
        <dbReference type="EMBL" id="AAC50062.1"/>
    </source>
</evidence>
<evidence type="ECO:0007744" key="15">
    <source>
    </source>
</evidence>
<evidence type="ECO:0007744" key="16">
    <source>
    </source>
</evidence>
<evidence type="ECO:0007744" key="17">
    <source>
    </source>
</evidence>
<evidence type="ECO:0007744" key="18">
    <source>
    </source>
</evidence>
<evidence type="ECO:0007744" key="19">
    <source>
    </source>
</evidence>
<evidence type="ECO:0007829" key="20">
    <source>
        <dbReference type="PDB" id="7CCC"/>
    </source>
</evidence>
<comment type="function">
    <text evidence="1">Actin-binding protein involved in motile and morphological processes. Inhibits actin polymerization, likely by sequestering G-actin. By capping the barbed ends of filaments, it also regulates motility. Seems to play an important role in clathrin-mediated endocytosis and distribution of endocytic organelles (By similarity).</text>
</comment>
<comment type="subunit">
    <text evidence="3 6">Interacts with G-actin; ADP-actin form and capping protein (CP). May also be able to interact with TWF2 and phosphoinositides, PI(4,5)P2. When bound to PI(4,5)P2, it is down-regulated (By similarity). Interacts with ACTG1 (PubMed:28493397).</text>
</comment>
<comment type="interaction">
    <interactant intactId="EBI-1056675">
        <id>Q12792</id>
    </interactant>
    <interactant intactId="EBI-348169">
        <id>P67870</id>
        <label>CSNK2B</label>
    </interactant>
    <organismsDiffer>false</organismsDiffer>
    <experiments>3</experiments>
</comment>
<comment type="subcellular location">
    <subcellularLocation>
        <location>Cytoplasm</location>
    </subcellularLocation>
    <subcellularLocation>
        <location evidence="1">Cytoplasm</location>
        <location evidence="1">Cytoskeleton</location>
    </subcellularLocation>
    <text evidence="1">Diffuse cytoplasmic localization with perinuclear and G-actin-rich cortical actin structures sublocalization. Also found at membrane ruffles and cell-cell contacts (By similarity).</text>
</comment>
<comment type="alternative products">
    <event type="alternative splicing"/>
    <isoform>
        <id>Q12792-2</id>
        <name evidence="12">1</name>
        <sequence type="displayed"/>
    </isoform>
    <isoform>
        <id>Q12792-3</id>
        <name>3</name>
        <sequence type="described" ref="VSP_017899"/>
    </isoform>
    <isoform>
        <id>Q12792-4</id>
        <name>4</name>
        <sequence type="described" ref="VSP_038075"/>
    </isoform>
</comment>
<comment type="tissue specificity">
    <text evidence="7">Expressed at high levels in the colon, testis, ovary, prostate and lung. Expressed at lower levels in the brain, bladder and heart. Not detected in liver.</text>
</comment>
<comment type="PTM">
    <text evidence="7">Phosphorylated on serine and threonine residues.</text>
</comment>
<comment type="disease">
    <text evidence="6">Defects in TWF1 has been found in a patient with isolated coloboma, a defect of the eye characterized by the absence of ocular structures due to abnormal morphogenesis of the optic cup and stalk, and the fusion of the fetal fissure (optic fissure). Isolated colobomas may be associated with an abnormally small eye (microphthalmia) or small cornea.</text>
</comment>
<comment type="similarity">
    <text evidence="12">Belongs to the actin-binding proteins ADF family. Twinfilin subfamily.</text>
</comment>
<comment type="caution">
    <text evidence="13">Was originally thought to have protein tyrosine kinase activity.</text>
</comment>
<comment type="sequence caution" evidence="12">
    <conflict type="erroneous initiation">
        <sequence resource="EMBL-CDS" id="AAH43148"/>
    </conflict>
</comment>
<comment type="sequence caution" evidence="12">
    <conflict type="erroneous initiation">
        <sequence resource="EMBL-CDS" id="AAH68548"/>
    </conflict>
</comment>
<comment type="sequence caution" evidence="12">
    <conflict type="erroneous initiation">
        <sequence resource="EMBL-CDS" id="BAD92539"/>
    </conflict>
</comment>
<comment type="online information" name="Protein Spotlight">
    <link uri="https://www.proteinspotlight.org/back_issues/073"/>
    <text>Molecular embrace - Issue 73 of August 2006</text>
</comment>
<reference evidence="12" key="1">
    <citation type="journal article" date="1994" name="Mol. Cell. Biol.">
        <title>Prokaryotic expression cloning of a novel human tyrosine kinase.</title>
        <authorList>
            <person name="Beeler J.F."/>
            <person name="LaRochelle W.J."/>
            <person name="Chedid M."/>
            <person name="Tronick S.R."/>
            <person name="Aaronson S.A."/>
        </authorList>
    </citation>
    <scope>NUCLEOTIDE SEQUENCE [MRNA] (ISOFORM 1)</scope>
    <scope>TISSUE SPECIFICITY</scope>
    <scope>PHOSPHORYLATION</scope>
    <source>
        <tissue>Lung fibroblast</tissue>
    </source>
</reference>
<reference key="2">
    <citation type="journal article" date="2004" name="Nat. Genet.">
        <title>Complete sequencing and characterization of 21,243 full-length human cDNAs.</title>
        <authorList>
            <person name="Ota T."/>
            <person name="Suzuki Y."/>
            <person name="Nishikawa T."/>
            <person name="Otsuki T."/>
            <person name="Sugiyama T."/>
            <person name="Irie R."/>
            <person name="Wakamatsu A."/>
            <person name="Hayashi K."/>
            <person name="Sato H."/>
            <person name="Nagai K."/>
            <person name="Kimura K."/>
            <person name="Makita H."/>
            <person name="Sekine M."/>
            <person name="Obayashi M."/>
            <person name="Nishi T."/>
            <person name="Shibahara T."/>
            <person name="Tanaka T."/>
            <person name="Ishii S."/>
            <person name="Yamamoto J."/>
            <person name="Saito K."/>
            <person name="Kawai Y."/>
            <person name="Isono Y."/>
            <person name="Nakamura Y."/>
            <person name="Nagahari K."/>
            <person name="Murakami K."/>
            <person name="Yasuda T."/>
            <person name="Iwayanagi T."/>
            <person name="Wagatsuma M."/>
            <person name="Shiratori A."/>
            <person name="Sudo H."/>
            <person name="Hosoiri T."/>
            <person name="Kaku Y."/>
            <person name="Kodaira H."/>
            <person name="Kondo H."/>
            <person name="Sugawara M."/>
            <person name="Takahashi M."/>
            <person name="Kanda K."/>
            <person name="Yokoi T."/>
            <person name="Furuya T."/>
            <person name="Kikkawa E."/>
            <person name="Omura Y."/>
            <person name="Abe K."/>
            <person name="Kamihara K."/>
            <person name="Katsuta N."/>
            <person name="Sato K."/>
            <person name="Tanikawa M."/>
            <person name="Yamazaki M."/>
            <person name="Ninomiya K."/>
            <person name="Ishibashi T."/>
            <person name="Yamashita H."/>
            <person name="Murakawa K."/>
            <person name="Fujimori K."/>
            <person name="Tanai H."/>
            <person name="Kimata M."/>
            <person name="Watanabe M."/>
            <person name="Hiraoka S."/>
            <person name="Chiba Y."/>
            <person name="Ishida S."/>
            <person name="Ono Y."/>
            <person name="Takiguchi S."/>
            <person name="Watanabe S."/>
            <person name="Yosida M."/>
            <person name="Hotuta T."/>
            <person name="Kusano J."/>
            <person name="Kanehori K."/>
            <person name="Takahashi-Fujii A."/>
            <person name="Hara H."/>
            <person name="Tanase T.-O."/>
            <person name="Nomura Y."/>
            <person name="Togiya S."/>
            <person name="Komai F."/>
            <person name="Hara R."/>
            <person name="Takeuchi K."/>
            <person name="Arita M."/>
            <person name="Imose N."/>
            <person name="Musashino K."/>
            <person name="Yuuki H."/>
            <person name="Oshima A."/>
            <person name="Sasaki N."/>
            <person name="Aotsuka S."/>
            <person name="Yoshikawa Y."/>
            <person name="Matsunawa H."/>
            <person name="Ichihara T."/>
            <person name="Shiohata N."/>
            <person name="Sano S."/>
            <person name="Moriya S."/>
            <person name="Momiyama H."/>
            <person name="Satoh N."/>
            <person name="Takami S."/>
            <person name="Terashima Y."/>
            <person name="Suzuki O."/>
            <person name="Nakagawa S."/>
            <person name="Senoh A."/>
            <person name="Mizoguchi H."/>
            <person name="Goto Y."/>
            <person name="Shimizu F."/>
            <person name="Wakebe H."/>
            <person name="Hishigaki H."/>
            <person name="Watanabe T."/>
            <person name="Sugiyama A."/>
            <person name="Takemoto M."/>
            <person name="Kawakami B."/>
            <person name="Yamazaki M."/>
            <person name="Watanabe K."/>
            <person name="Kumagai A."/>
            <person name="Itakura S."/>
            <person name="Fukuzumi Y."/>
            <person name="Fujimori Y."/>
            <person name="Komiyama M."/>
            <person name="Tashiro H."/>
            <person name="Tanigami A."/>
            <person name="Fujiwara T."/>
            <person name="Ono T."/>
            <person name="Yamada K."/>
            <person name="Fujii Y."/>
            <person name="Ozaki K."/>
            <person name="Hirao M."/>
            <person name="Ohmori Y."/>
            <person name="Kawabata A."/>
            <person name="Hikiji T."/>
            <person name="Kobatake N."/>
            <person name="Inagaki H."/>
            <person name="Ikema Y."/>
            <person name="Okamoto S."/>
            <person name="Okitani R."/>
            <person name="Kawakami T."/>
            <person name="Noguchi S."/>
            <person name="Itoh T."/>
            <person name="Shigeta K."/>
            <person name="Senba T."/>
            <person name="Matsumura K."/>
            <person name="Nakajima Y."/>
            <person name="Mizuno T."/>
            <person name="Morinaga M."/>
            <person name="Sasaki M."/>
            <person name="Togashi T."/>
            <person name="Oyama M."/>
            <person name="Hata H."/>
            <person name="Watanabe M."/>
            <person name="Komatsu T."/>
            <person name="Mizushima-Sugano J."/>
            <person name="Satoh T."/>
            <person name="Shirai Y."/>
            <person name="Takahashi Y."/>
            <person name="Nakagawa K."/>
            <person name="Okumura K."/>
            <person name="Nagase T."/>
            <person name="Nomura N."/>
            <person name="Kikuchi H."/>
            <person name="Masuho Y."/>
            <person name="Yamashita R."/>
            <person name="Nakai K."/>
            <person name="Yada T."/>
            <person name="Nakamura Y."/>
            <person name="Ohara O."/>
            <person name="Isogai T."/>
            <person name="Sugano S."/>
        </authorList>
    </citation>
    <scope>NUCLEOTIDE SEQUENCE [LARGE SCALE MRNA] (ISOFORMS 1 AND 4)</scope>
    <source>
        <tissue>Brain</tissue>
        <tissue>Placenta</tissue>
        <tissue>Teratocarcinoma</tissue>
    </source>
</reference>
<reference evidence="12" key="3">
    <citation type="submission" date="2004-06" db="EMBL/GenBank/DDBJ databases">
        <title>Cloning of human full open reading frames in Gateway(TM) system entry vector (pDONR201).</title>
        <authorList>
            <person name="Halleck A."/>
            <person name="Ebert L."/>
            <person name="Mkoundinya M."/>
            <person name="Schick M."/>
            <person name="Eisenstein S."/>
            <person name="Neubert P."/>
            <person name="Kstrang K."/>
            <person name="Schatten R."/>
            <person name="Shen B."/>
            <person name="Henze S."/>
            <person name="Mar W."/>
            <person name="Korn B."/>
            <person name="Zuo D."/>
            <person name="Hu Y."/>
            <person name="LaBaer J."/>
        </authorList>
    </citation>
    <scope>NUCLEOTIDE SEQUENCE [LARGE SCALE MRNA] (ISOFORM 1)</scope>
</reference>
<reference evidence="12" key="4">
    <citation type="submission" date="2004-10" db="EMBL/GenBank/DDBJ databases">
        <title>Cloning of human full-length CDSs in BD Creator(TM) system donor vector.</title>
        <authorList>
            <person name="Kalnine N."/>
            <person name="Chen X."/>
            <person name="Rolfs A."/>
            <person name="Halleck A."/>
            <person name="Hines L."/>
            <person name="Eisenstein S."/>
            <person name="Koundinya M."/>
            <person name="Raphael J."/>
            <person name="Moreira D."/>
            <person name="Kelley T."/>
            <person name="LaBaer J."/>
            <person name="Lin Y."/>
            <person name="Phelan M."/>
            <person name="Farmer A."/>
        </authorList>
    </citation>
    <scope>NUCLEOTIDE SEQUENCE [LARGE SCALE MRNA] (ISOFORM 1)</scope>
</reference>
<reference evidence="12" key="5">
    <citation type="submission" date="2005-03" db="EMBL/GenBank/DDBJ databases">
        <authorList>
            <person name="Totoki Y."/>
            <person name="Toyoda A."/>
            <person name="Takeda T."/>
            <person name="Sakaki Y."/>
            <person name="Tanaka A."/>
            <person name="Yokoyama S."/>
            <person name="Ohara O."/>
            <person name="Nagase T."/>
            <person name="Kikuno R.F."/>
        </authorList>
    </citation>
    <scope>NUCLEOTIDE SEQUENCE [LARGE SCALE MRNA] (ISOFORM 3)</scope>
    <source>
        <tissue>Brain</tissue>
    </source>
</reference>
<reference key="6">
    <citation type="journal article" date="2004" name="Genome Res.">
        <title>The status, quality, and expansion of the NIH full-length cDNA project: the Mammalian Gene Collection (MGC).</title>
        <authorList>
            <consortium name="The MGC Project Team"/>
        </authorList>
    </citation>
    <scope>NUCLEOTIDE SEQUENCE [LARGE SCALE MRNA] (ISOFORMS 1 AND 4)</scope>
    <source>
        <tissue>Prostate</tissue>
        <tissue>Testis</tissue>
    </source>
</reference>
<reference evidence="12" key="7">
    <citation type="submission" date="2008-03" db="UniProtKB">
        <authorList>
            <person name="Bienvenut W.V."/>
            <person name="Calvo F."/>
            <person name="Kolch W."/>
        </authorList>
    </citation>
    <scope>PROTEIN SEQUENCE OF 2-37 (ISOFORMS 1/3)</scope>
    <scope>PROTEIN SEQUENCE OF 65-72; 99-105; 111-155; 172-192; 236-242 AND 279-285 (ISOFORMS 1/3)</scope>
    <scope>PROTEIN SEQUENCE OF 159-171 (ISOFORM 1)</scope>
    <scope>CLEAVAGE OF INITIATOR METHIONINE</scope>
    <scope>ACETYLATION AT SER-2</scope>
    <scope>IDENTIFICATION BY MASS SPECTROMETRY</scope>
    <source>
        <tissue>Cervix carcinoma</tissue>
    </source>
</reference>
<reference key="8">
    <citation type="journal article" date="2005" name="Nat. Biotechnol.">
        <title>Immunoaffinity profiling of tyrosine phosphorylation in cancer cells.</title>
        <authorList>
            <person name="Rush J."/>
            <person name="Moritz A."/>
            <person name="Lee K.A."/>
            <person name="Guo A."/>
            <person name="Goss V.L."/>
            <person name="Spek E.J."/>
            <person name="Zhang H."/>
            <person name="Zha X.-M."/>
            <person name="Polakiewicz R.D."/>
            <person name="Comb M.J."/>
        </authorList>
    </citation>
    <scope>PHOSPHORYLATION [LARGE SCALE ANALYSIS] AT TYR-309</scope>
    <scope>IDENTIFICATION BY MASS SPECTROMETRY [LARGE SCALE ANALYSIS]</scope>
</reference>
<reference key="9">
    <citation type="journal article" date="2008" name="Proc. Natl. Acad. Sci. U.S.A.">
        <title>A quantitative atlas of mitotic phosphorylation.</title>
        <authorList>
            <person name="Dephoure N."/>
            <person name="Zhou C."/>
            <person name="Villen J."/>
            <person name="Beausoleil S.A."/>
            <person name="Bakalarski C.E."/>
            <person name="Elledge S.J."/>
            <person name="Gygi S.P."/>
        </authorList>
    </citation>
    <scope>PHOSPHORYLATION [LARGE SCALE ANALYSIS] AT THR-349</scope>
    <scope>IDENTIFICATION BY MASS SPECTROMETRY [LARGE SCALE ANALYSIS]</scope>
    <source>
        <tissue>Cervix carcinoma</tissue>
    </source>
</reference>
<reference key="10">
    <citation type="journal article" date="2009" name="Sci. Signal.">
        <title>Quantitative phosphoproteomic analysis of T cell receptor signaling reveals system-wide modulation of protein-protein interactions.</title>
        <authorList>
            <person name="Mayya V."/>
            <person name="Lundgren D.H."/>
            <person name="Hwang S.-I."/>
            <person name="Rezaul K."/>
            <person name="Wu L."/>
            <person name="Eng J.K."/>
            <person name="Rodionov V."/>
            <person name="Han D.K."/>
        </authorList>
    </citation>
    <scope>PHOSPHORYLATION [LARGE SCALE ANALYSIS] AT TYR-309</scope>
    <scope>IDENTIFICATION BY MASS SPECTROMETRY [LARGE SCALE ANALYSIS]</scope>
    <source>
        <tissue>Leukemic T-cell</tissue>
    </source>
</reference>
<reference key="11">
    <citation type="journal article" date="2010" name="Sci. Signal.">
        <title>Quantitative phosphoproteomics reveals widespread full phosphorylation site occupancy during mitosis.</title>
        <authorList>
            <person name="Olsen J.V."/>
            <person name="Vermeulen M."/>
            <person name="Santamaria A."/>
            <person name="Kumar C."/>
            <person name="Miller M.L."/>
            <person name="Jensen L.J."/>
            <person name="Gnad F."/>
            <person name="Cox J."/>
            <person name="Jensen T.S."/>
            <person name="Nigg E.A."/>
            <person name="Brunak S."/>
            <person name="Mann M."/>
        </authorList>
    </citation>
    <scope>PHOSPHORYLATION [LARGE SCALE ANALYSIS] AT SER-143</scope>
    <scope>IDENTIFICATION BY MASS SPECTROMETRY [LARGE SCALE ANALYSIS]</scope>
    <source>
        <tissue>Cervix carcinoma</tissue>
    </source>
</reference>
<reference key="12">
    <citation type="journal article" date="2011" name="BMC Syst. Biol.">
        <title>Initial characterization of the human central proteome.</title>
        <authorList>
            <person name="Burkard T.R."/>
            <person name="Planyavsky M."/>
            <person name="Kaupe I."/>
            <person name="Breitwieser F.P."/>
            <person name="Buerckstuemmer T."/>
            <person name="Bennett K.L."/>
            <person name="Superti-Furga G."/>
            <person name="Colinge J."/>
        </authorList>
    </citation>
    <scope>IDENTIFICATION BY MASS SPECTROMETRY [LARGE SCALE ANALYSIS]</scope>
</reference>
<reference key="13">
    <citation type="journal article" date="2013" name="J. Proteome Res.">
        <title>Toward a comprehensive characterization of a human cancer cell phosphoproteome.</title>
        <authorList>
            <person name="Zhou H."/>
            <person name="Di Palma S."/>
            <person name="Preisinger C."/>
            <person name="Peng M."/>
            <person name="Polat A.N."/>
            <person name="Heck A.J."/>
            <person name="Mohammed S."/>
        </authorList>
    </citation>
    <scope>IDENTIFICATION BY MASS SPECTROMETRY [LARGE SCALE ANALYSIS]</scope>
    <source>
        <tissue>Cervix carcinoma</tissue>
        <tissue>Erythroleukemia</tissue>
    </source>
</reference>
<reference key="14">
    <citation type="journal article" date="2014" name="J. Proteomics">
        <title>An enzyme assisted RP-RPLC approach for in-depth analysis of human liver phosphoproteome.</title>
        <authorList>
            <person name="Bian Y."/>
            <person name="Song C."/>
            <person name="Cheng K."/>
            <person name="Dong M."/>
            <person name="Wang F."/>
            <person name="Huang J."/>
            <person name="Sun D."/>
            <person name="Wang L."/>
            <person name="Ye M."/>
            <person name="Zou H."/>
        </authorList>
    </citation>
    <scope>PHOSPHORYLATION [LARGE SCALE ANALYSIS] AT SER-143</scope>
    <scope>IDENTIFICATION BY MASS SPECTROMETRY [LARGE SCALE ANALYSIS]</scope>
    <source>
        <tissue>Liver</tissue>
    </source>
</reference>
<reference key="15">
    <citation type="journal article" date="2017" name="Hum. Mutat.">
        <title>A recurrent de novo mutation in ACTG1 causes isolated ocular coloboma.</title>
        <authorList>
            <consortium name="UK10K"/>
            <person name="Rainger J."/>
            <person name="Williamson K.A."/>
            <person name="Soares D.C."/>
            <person name="Truch J."/>
            <person name="Kurian D."/>
            <person name="Gillessen-Kaesbach G."/>
            <person name="Seawright A."/>
            <person name="Prendergast J."/>
            <person name="Halachev M."/>
            <person name="Wheeler A."/>
            <person name="McTeir L."/>
            <person name="Gill A.C."/>
            <person name="van Heyningen V."/>
            <person name="Davey M.G."/>
            <person name="FitzPatrick D.R."/>
        </authorList>
    </citation>
    <scope>VARIANT SER-349 (ISOFORM 3)</scope>
    <scope>CHARACTERIZATION OF VARIANT SER-349 (ISOFORM 3)</scope>
    <scope>INTERACTION WITH ACTG1</scope>
</reference>
<keyword id="KW-0002">3D-structure</keyword>
<keyword id="KW-0007">Acetylation</keyword>
<keyword id="KW-0009">Actin-binding</keyword>
<keyword id="KW-0025">Alternative splicing</keyword>
<keyword id="KW-0963">Cytoplasm</keyword>
<keyword id="KW-0206">Cytoskeleton</keyword>
<keyword id="KW-0903">Direct protein sequencing</keyword>
<keyword id="KW-0225">Disease variant</keyword>
<keyword id="KW-0597">Phosphoprotein</keyword>
<keyword id="KW-1267">Proteomics identification</keyword>
<keyword id="KW-1185">Reference proteome</keyword>
<keyword id="KW-0677">Repeat</keyword>
<protein>
    <recommendedName>
        <fullName>Twinfilin-1</fullName>
    </recommendedName>
    <alternativeName>
        <fullName>Protein A6</fullName>
    </alternativeName>
    <alternativeName>
        <fullName>Protein tyrosine kinase 9</fullName>
    </alternativeName>
</protein>
<sequence>MSHQTGIQASEDVKEIFARARNGKYRLLKISIENEQLVIGSYSQPSDSWDKDYDSFVLPLLEDKQPCYILFRLDSQNAQGYEWIFIAWSPDHSHVRQKMLYAATRATLKKEFGGGHIKDEVFGTVKEDVSLHGYKKYLLSQSSPAPLTAAEEELRQIKINEVQTDVGVDTKHQTLQGVAFPISREAFQALEKLNNRQLNYVQLEIDIKNEIIILANTTNTELKDLPKRIPKDSARYHFFLYKHSHEGDYLESIVFIYSMPGYTCSIRERMLYSSCKSRLLEIVERQLQMDVIRKIEIDNGDELTADFLYEEVHPKQHAHKQSFAKPKGPAGKRGIRRLIRGPAETEATTD</sequence>
<organism evidence="14">
    <name type="scientific">Homo sapiens</name>
    <name type="common">Human</name>
    <dbReference type="NCBI Taxonomy" id="9606"/>
    <lineage>
        <taxon>Eukaryota</taxon>
        <taxon>Metazoa</taxon>
        <taxon>Chordata</taxon>
        <taxon>Craniata</taxon>
        <taxon>Vertebrata</taxon>
        <taxon>Euteleostomi</taxon>
        <taxon>Mammalia</taxon>
        <taxon>Eutheria</taxon>
        <taxon>Euarchontoglires</taxon>
        <taxon>Primates</taxon>
        <taxon>Haplorrhini</taxon>
        <taxon>Catarrhini</taxon>
        <taxon>Hominidae</taxon>
        <taxon>Homo</taxon>
    </lineage>
</organism>